<gene>
    <name evidence="1" type="primary">hisC</name>
    <name type="ordered locus">NMA1771</name>
</gene>
<dbReference type="EC" id="2.6.1.9" evidence="1"/>
<dbReference type="EMBL" id="AL157959">
    <property type="protein sequence ID" value="CAM08898.1"/>
    <property type="molecule type" value="Genomic_DNA"/>
</dbReference>
<dbReference type="PIR" id="C81802">
    <property type="entry name" value="C81802"/>
</dbReference>
<dbReference type="RefSeq" id="WP_002212810.1">
    <property type="nucleotide sequence ID" value="NC_003116.1"/>
</dbReference>
<dbReference type="SMR" id="Q9JTH8"/>
<dbReference type="EnsemblBacteria" id="CAM08898">
    <property type="protein sequence ID" value="CAM08898"/>
    <property type="gene ID" value="NMA1771"/>
</dbReference>
<dbReference type="GeneID" id="93387805"/>
<dbReference type="KEGG" id="nma:NMA1771"/>
<dbReference type="HOGENOM" id="CLU_017584_3_1_4"/>
<dbReference type="UniPathway" id="UPA00031">
    <property type="reaction ID" value="UER00012"/>
</dbReference>
<dbReference type="Proteomes" id="UP000000626">
    <property type="component" value="Chromosome"/>
</dbReference>
<dbReference type="GO" id="GO:0004400">
    <property type="term" value="F:histidinol-phosphate transaminase activity"/>
    <property type="evidence" value="ECO:0007669"/>
    <property type="project" value="UniProtKB-UniRule"/>
</dbReference>
<dbReference type="GO" id="GO:0030170">
    <property type="term" value="F:pyridoxal phosphate binding"/>
    <property type="evidence" value="ECO:0007669"/>
    <property type="project" value="InterPro"/>
</dbReference>
<dbReference type="GO" id="GO:0000105">
    <property type="term" value="P:L-histidine biosynthetic process"/>
    <property type="evidence" value="ECO:0007669"/>
    <property type="project" value="UniProtKB-UniRule"/>
</dbReference>
<dbReference type="CDD" id="cd00609">
    <property type="entry name" value="AAT_like"/>
    <property type="match status" value="1"/>
</dbReference>
<dbReference type="Gene3D" id="3.90.1150.10">
    <property type="entry name" value="Aspartate Aminotransferase, domain 1"/>
    <property type="match status" value="1"/>
</dbReference>
<dbReference type="Gene3D" id="3.40.640.10">
    <property type="entry name" value="Type I PLP-dependent aspartate aminotransferase-like (Major domain)"/>
    <property type="match status" value="1"/>
</dbReference>
<dbReference type="HAMAP" id="MF_01023">
    <property type="entry name" value="HisC_aminotrans_2"/>
    <property type="match status" value="1"/>
</dbReference>
<dbReference type="InterPro" id="IPR004839">
    <property type="entry name" value="Aminotransferase_I/II_large"/>
</dbReference>
<dbReference type="InterPro" id="IPR005861">
    <property type="entry name" value="HisP_aminotrans"/>
</dbReference>
<dbReference type="InterPro" id="IPR015424">
    <property type="entry name" value="PyrdxlP-dep_Trfase"/>
</dbReference>
<dbReference type="InterPro" id="IPR015421">
    <property type="entry name" value="PyrdxlP-dep_Trfase_major"/>
</dbReference>
<dbReference type="InterPro" id="IPR015422">
    <property type="entry name" value="PyrdxlP-dep_Trfase_small"/>
</dbReference>
<dbReference type="NCBIfam" id="TIGR01141">
    <property type="entry name" value="hisC"/>
    <property type="match status" value="1"/>
</dbReference>
<dbReference type="PANTHER" id="PTHR42885:SF2">
    <property type="entry name" value="HISTIDINOL-PHOSPHATE AMINOTRANSFERASE"/>
    <property type="match status" value="1"/>
</dbReference>
<dbReference type="PANTHER" id="PTHR42885">
    <property type="entry name" value="HISTIDINOL-PHOSPHATE AMINOTRANSFERASE-RELATED"/>
    <property type="match status" value="1"/>
</dbReference>
<dbReference type="Pfam" id="PF00155">
    <property type="entry name" value="Aminotran_1_2"/>
    <property type="match status" value="1"/>
</dbReference>
<dbReference type="SUPFAM" id="SSF53383">
    <property type="entry name" value="PLP-dependent transferases"/>
    <property type="match status" value="1"/>
</dbReference>
<accession>Q9JTH8</accession>
<accession>A1ISY6</accession>
<organism>
    <name type="scientific">Neisseria meningitidis serogroup A / serotype 4A (strain DSM 15465 / Z2491)</name>
    <dbReference type="NCBI Taxonomy" id="122587"/>
    <lineage>
        <taxon>Bacteria</taxon>
        <taxon>Pseudomonadati</taxon>
        <taxon>Pseudomonadota</taxon>
        <taxon>Betaproteobacteria</taxon>
        <taxon>Neisseriales</taxon>
        <taxon>Neisseriaceae</taxon>
        <taxon>Neisseria</taxon>
    </lineage>
</organism>
<feature type="chain" id="PRO_0000153399" description="Histidinol-phosphate aminotransferase">
    <location>
        <begin position="1"/>
        <end position="365"/>
    </location>
</feature>
<feature type="modified residue" description="N6-(pyridoxal phosphate)lysine" evidence="1">
    <location>
        <position position="220"/>
    </location>
</feature>
<evidence type="ECO:0000255" key="1">
    <source>
        <dbReference type="HAMAP-Rule" id="MF_01023"/>
    </source>
</evidence>
<keyword id="KW-0028">Amino-acid biosynthesis</keyword>
<keyword id="KW-0032">Aminotransferase</keyword>
<keyword id="KW-0368">Histidine biosynthesis</keyword>
<keyword id="KW-0663">Pyridoxal phosphate</keyword>
<keyword id="KW-0808">Transferase</keyword>
<reference key="1">
    <citation type="journal article" date="2000" name="Nature">
        <title>Complete DNA sequence of a serogroup A strain of Neisseria meningitidis Z2491.</title>
        <authorList>
            <person name="Parkhill J."/>
            <person name="Achtman M."/>
            <person name="James K.D."/>
            <person name="Bentley S.D."/>
            <person name="Churcher C.M."/>
            <person name="Klee S.R."/>
            <person name="Morelli G."/>
            <person name="Basham D."/>
            <person name="Brown D."/>
            <person name="Chillingworth T."/>
            <person name="Davies R.M."/>
            <person name="Davis P."/>
            <person name="Devlin K."/>
            <person name="Feltwell T."/>
            <person name="Hamlin N."/>
            <person name="Holroyd S."/>
            <person name="Jagels K."/>
            <person name="Leather S."/>
            <person name="Moule S."/>
            <person name="Mungall K.L."/>
            <person name="Quail M.A."/>
            <person name="Rajandream M.A."/>
            <person name="Rutherford K.M."/>
            <person name="Simmonds M."/>
            <person name="Skelton J."/>
            <person name="Whitehead S."/>
            <person name="Spratt B.G."/>
            <person name="Barrell B.G."/>
        </authorList>
    </citation>
    <scope>NUCLEOTIDE SEQUENCE [LARGE SCALE GENOMIC DNA]</scope>
    <source>
        <strain>DSM 15465 / Z2491</strain>
    </source>
</reference>
<sequence length="365" mass="39848">MKSVRSFIRDDIQAMSAYQIADVPPGFAKLDSMESPVHPFAGHETLLQEWQARLAAAPIHLYPNPSGSGLQEALRSAFDIPDCADIALGNGSDELIQFITMLTAKPGAAMLAAEPSFVMYRHNAALYGMDYVGVPLNGDFTLNLPAVLEAVRKHRPALTFIAYPNNPTGVCFTRAEIEAVIEASDGIVVVDEAYGAFNGDSFLPQAGSIPNLIVMRTVSKIGFAGLRIGYAAGCPEVIGELQKILPPYNMNQLSLTTAKLALQHYGIISANIDSLKNERERMFAELGKICRLNTFPSQANFITIRVPDADLLFDTLKQNRILVKKLHGAHPLLEHCLRITVGSPAQNDAVLNIIRQLYCQPTDFL</sequence>
<protein>
    <recommendedName>
        <fullName evidence="1">Histidinol-phosphate aminotransferase</fullName>
        <ecNumber evidence="1">2.6.1.9</ecNumber>
    </recommendedName>
    <alternativeName>
        <fullName evidence="1">Imidazole acetol-phosphate transaminase</fullName>
    </alternativeName>
</protein>
<proteinExistence type="inferred from homology"/>
<name>HIS8_NEIMA</name>
<comment type="catalytic activity">
    <reaction evidence="1">
        <text>L-histidinol phosphate + 2-oxoglutarate = 3-(imidazol-4-yl)-2-oxopropyl phosphate + L-glutamate</text>
        <dbReference type="Rhea" id="RHEA:23744"/>
        <dbReference type="ChEBI" id="CHEBI:16810"/>
        <dbReference type="ChEBI" id="CHEBI:29985"/>
        <dbReference type="ChEBI" id="CHEBI:57766"/>
        <dbReference type="ChEBI" id="CHEBI:57980"/>
        <dbReference type="EC" id="2.6.1.9"/>
    </reaction>
</comment>
<comment type="cofactor">
    <cofactor evidence="1">
        <name>pyridoxal 5'-phosphate</name>
        <dbReference type="ChEBI" id="CHEBI:597326"/>
    </cofactor>
</comment>
<comment type="pathway">
    <text evidence="1">Amino-acid biosynthesis; L-histidine biosynthesis; L-histidine from 5-phospho-alpha-D-ribose 1-diphosphate: step 7/9.</text>
</comment>
<comment type="subunit">
    <text evidence="1">Homodimer.</text>
</comment>
<comment type="similarity">
    <text evidence="1">Belongs to the class-II pyridoxal-phosphate-dependent aminotransferase family. Histidinol-phosphate aminotransferase subfamily.</text>
</comment>